<keyword id="KW-0067">ATP-binding</keyword>
<keyword id="KW-0547">Nucleotide-binding</keyword>
<keyword id="KW-1185">Reference proteome</keyword>
<keyword id="KW-0808">Transferase</keyword>
<keyword id="KW-0833">Ubl conjugation pathway</keyword>
<organism>
    <name type="scientific">Arabidopsis thaliana</name>
    <name type="common">Mouse-ear cress</name>
    <dbReference type="NCBI Taxonomy" id="3702"/>
    <lineage>
        <taxon>Eukaryota</taxon>
        <taxon>Viridiplantae</taxon>
        <taxon>Streptophyta</taxon>
        <taxon>Embryophyta</taxon>
        <taxon>Tracheophyta</taxon>
        <taxon>Spermatophyta</taxon>
        <taxon>Magnoliopsida</taxon>
        <taxon>eudicotyledons</taxon>
        <taxon>Gunneridae</taxon>
        <taxon>Pentapetalae</taxon>
        <taxon>rosids</taxon>
        <taxon>malvids</taxon>
        <taxon>Brassicales</taxon>
        <taxon>Brassicaceae</taxon>
        <taxon>Camelineae</taxon>
        <taxon>Arabidopsis</taxon>
    </lineage>
</organism>
<sequence>MATRRILKELKELQRDPPVSCSAGPTGEDMFHWQATIMGPNESPYSGGVFLVNIHFPPDYPFKPPKVVFRTKVFHPNINSNGNICLDILKDQWSPALTISKVLLSICSLLTDPNPDDPLVPEIAHIYKTDKTKYEAMARSWTQKYALF</sequence>
<comment type="function">
    <text>Accepts the ubiquitin from the E1 complex and catalyzes its covalent attachment to other proteins.</text>
</comment>
<comment type="catalytic activity">
    <reaction evidence="1 2">
        <text>S-ubiquitinyl-[E1 ubiquitin-activating enzyme]-L-cysteine + [E2 ubiquitin-conjugating enzyme]-L-cysteine = [E1 ubiquitin-activating enzyme]-L-cysteine + S-ubiquitinyl-[E2 ubiquitin-conjugating enzyme]-L-cysteine.</text>
        <dbReference type="EC" id="2.3.2.23"/>
    </reaction>
</comment>
<comment type="pathway">
    <text evidence="1">Protein modification; protein ubiquitination.</text>
</comment>
<comment type="similarity">
    <text evidence="1">Belongs to the ubiquitin-conjugating enzyme family.</text>
</comment>
<accession>Q9SLE4</accession>
<proteinExistence type="evidence at transcript level"/>
<protein>
    <recommendedName>
        <fullName>Ubiquitin-conjugating enzyme E2 29</fullName>
        <ecNumber>2.3.2.23</ecNumber>
    </recommendedName>
    <alternativeName>
        <fullName>E2 ubiquitin-conjugating enzyme 29</fullName>
    </alternativeName>
    <alternativeName>
        <fullName>Ubiquitin carrier protein 29</fullName>
    </alternativeName>
</protein>
<dbReference type="EC" id="2.3.2.23"/>
<dbReference type="EMBL" id="DQ027042">
    <property type="protein sequence ID" value="AAY44868.1"/>
    <property type="molecule type" value="mRNA"/>
</dbReference>
<dbReference type="EMBL" id="AC005825">
    <property type="protein sequence ID" value="AAD24607.1"/>
    <property type="molecule type" value="Genomic_DNA"/>
</dbReference>
<dbReference type="EMBL" id="CP002685">
    <property type="protein sequence ID" value="AEC06533.1"/>
    <property type="molecule type" value="Genomic_DNA"/>
</dbReference>
<dbReference type="EMBL" id="AY063872">
    <property type="protein sequence ID" value="AAL36228.1"/>
    <property type="molecule type" value="mRNA"/>
</dbReference>
<dbReference type="EMBL" id="AY091232">
    <property type="protein sequence ID" value="AAM14171.1"/>
    <property type="molecule type" value="mRNA"/>
</dbReference>
<dbReference type="EMBL" id="AY086787">
    <property type="protein sequence ID" value="AAM63837.1"/>
    <property type="molecule type" value="mRNA"/>
</dbReference>
<dbReference type="PIR" id="F84543">
    <property type="entry name" value="F84543"/>
</dbReference>
<dbReference type="RefSeq" id="NP_565391.1">
    <property type="nucleotide sequence ID" value="NM_127226.3"/>
</dbReference>
<dbReference type="SMR" id="Q9SLE4"/>
<dbReference type="BioGRID" id="1532">
    <property type="interactions" value="13"/>
</dbReference>
<dbReference type="FunCoup" id="Q9SLE4">
    <property type="interactions" value="3054"/>
</dbReference>
<dbReference type="IntAct" id="Q9SLE4">
    <property type="interactions" value="10"/>
</dbReference>
<dbReference type="STRING" id="3702.Q9SLE4"/>
<dbReference type="GlyGen" id="Q9SLE4">
    <property type="glycosylation" value="1 site"/>
</dbReference>
<dbReference type="PaxDb" id="3702-AT2G16740.1"/>
<dbReference type="ProteomicsDB" id="228660"/>
<dbReference type="EnsemblPlants" id="AT2G16740.1">
    <property type="protein sequence ID" value="AT2G16740.1"/>
    <property type="gene ID" value="AT2G16740"/>
</dbReference>
<dbReference type="GeneID" id="816175"/>
<dbReference type="Gramene" id="AT2G16740.1">
    <property type="protein sequence ID" value="AT2G16740.1"/>
    <property type="gene ID" value="AT2G16740"/>
</dbReference>
<dbReference type="KEGG" id="ath:AT2G16740"/>
<dbReference type="Araport" id="AT2G16740"/>
<dbReference type="TAIR" id="AT2G16740">
    <property type="gene designation" value="UBC29"/>
</dbReference>
<dbReference type="eggNOG" id="KOG0417">
    <property type="taxonomic scope" value="Eukaryota"/>
</dbReference>
<dbReference type="HOGENOM" id="CLU_030988_13_3_1"/>
<dbReference type="InParanoid" id="Q9SLE4"/>
<dbReference type="OMA" id="MPEIAHM"/>
<dbReference type="PhylomeDB" id="Q9SLE4"/>
<dbReference type="UniPathway" id="UPA00143"/>
<dbReference type="PRO" id="PR:Q9SLE4"/>
<dbReference type="Proteomes" id="UP000006548">
    <property type="component" value="Chromosome 2"/>
</dbReference>
<dbReference type="ExpressionAtlas" id="Q9SLE4">
    <property type="expression patterns" value="baseline and differential"/>
</dbReference>
<dbReference type="GO" id="GO:0005524">
    <property type="term" value="F:ATP binding"/>
    <property type="evidence" value="ECO:0007669"/>
    <property type="project" value="UniProtKB-KW"/>
</dbReference>
<dbReference type="GO" id="GO:0061631">
    <property type="term" value="F:ubiquitin conjugating enzyme activity"/>
    <property type="evidence" value="ECO:0007669"/>
    <property type="project" value="UniProtKB-EC"/>
</dbReference>
<dbReference type="GO" id="GO:0004842">
    <property type="term" value="F:ubiquitin-protein transferase activity"/>
    <property type="evidence" value="ECO:0000314"/>
    <property type="project" value="TAIR"/>
</dbReference>
<dbReference type="GO" id="GO:0016567">
    <property type="term" value="P:protein ubiquitination"/>
    <property type="evidence" value="ECO:0007669"/>
    <property type="project" value="UniProtKB-UniPathway"/>
</dbReference>
<dbReference type="GO" id="GO:0006511">
    <property type="term" value="P:ubiquitin-dependent protein catabolic process"/>
    <property type="evidence" value="ECO:0000314"/>
    <property type="project" value="TAIR"/>
</dbReference>
<dbReference type="CDD" id="cd23792">
    <property type="entry name" value="UBCc_UBE2D"/>
    <property type="match status" value="1"/>
</dbReference>
<dbReference type="FunFam" id="3.10.110.10:FF:000001">
    <property type="entry name" value="Ubiquitin-conjugating enzyme 28, E2"/>
    <property type="match status" value="1"/>
</dbReference>
<dbReference type="Gene3D" id="3.10.110.10">
    <property type="entry name" value="Ubiquitin Conjugating Enzyme"/>
    <property type="match status" value="1"/>
</dbReference>
<dbReference type="InterPro" id="IPR000608">
    <property type="entry name" value="UBQ-conjugat_E2_core"/>
</dbReference>
<dbReference type="InterPro" id="IPR023313">
    <property type="entry name" value="UBQ-conjugating_AS"/>
</dbReference>
<dbReference type="InterPro" id="IPR016135">
    <property type="entry name" value="UBQ-conjugating_enzyme/RWD"/>
</dbReference>
<dbReference type="PANTHER" id="PTHR24068">
    <property type="entry name" value="UBIQUITIN-CONJUGATING ENZYME E2"/>
    <property type="match status" value="1"/>
</dbReference>
<dbReference type="Pfam" id="PF00179">
    <property type="entry name" value="UQ_con"/>
    <property type="match status" value="1"/>
</dbReference>
<dbReference type="SMART" id="SM00212">
    <property type="entry name" value="UBCc"/>
    <property type="match status" value="1"/>
</dbReference>
<dbReference type="SUPFAM" id="SSF54495">
    <property type="entry name" value="UBC-like"/>
    <property type="match status" value="1"/>
</dbReference>
<dbReference type="PROSITE" id="PS00183">
    <property type="entry name" value="UBC_1"/>
    <property type="match status" value="1"/>
</dbReference>
<dbReference type="PROSITE" id="PS50127">
    <property type="entry name" value="UBC_2"/>
    <property type="match status" value="1"/>
</dbReference>
<evidence type="ECO:0000255" key="1">
    <source>
        <dbReference type="PROSITE-ProRule" id="PRU00388"/>
    </source>
</evidence>
<evidence type="ECO:0000255" key="2">
    <source>
        <dbReference type="PROSITE-ProRule" id="PRU10133"/>
    </source>
</evidence>
<reference key="1">
    <citation type="journal article" date="2005" name="Plant Physiol.">
        <title>Genome analysis and functional characterization of the E2 and RING-type E3 ligase ubiquitination enzymes of Arabidopsis.</title>
        <authorList>
            <person name="Kraft E."/>
            <person name="Stone S.L."/>
            <person name="Ma L."/>
            <person name="Su N."/>
            <person name="Gao Y."/>
            <person name="Lau O.-S."/>
            <person name="Deng X.-W."/>
            <person name="Callis J."/>
        </authorList>
    </citation>
    <scope>NUCLEOTIDE SEQUENCE [MRNA]</scope>
    <scope>GENE FAMILY</scope>
    <scope>NOMENCLATURE</scope>
</reference>
<reference key="2">
    <citation type="journal article" date="1999" name="Nature">
        <title>Sequence and analysis of chromosome 2 of the plant Arabidopsis thaliana.</title>
        <authorList>
            <person name="Lin X."/>
            <person name="Kaul S."/>
            <person name="Rounsley S.D."/>
            <person name="Shea T.P."/>
            <person name="Benito M.-I."/>
            <person name="Town C.D."/>
            <person name="Fujii C.Y."/>
            <person name="Mason T.M."/>
            <person name="Bowman C.L."/>
            <person name="Barnstead M.E."/>
            <person name="Feldblyum T.V."/>
            <person name="Buell C.R."/>
            <person name="Ketchum K.A."/>
            <person name="Lee J.J."/>
            <person name="Ronning C.M."/>
            <person name="Koo H.L."/>
            <person name="Moffat K.S."/>
            <person name="Cronin L.A."/>
            <person name="Shen M."/>
            <person name="Pai G."/>
            <person name="Van Aken S."/>
            <person name="Umayam L."/>
            <person name="Tallon L.J."/>
            <person name="Gill J.E."/>
            <person name="Adams M.D."/>
            <person name="Carrera A.J."/>
            <person name="Creasy T.H."/>
            <person name="Goodman H.M."/>
            <person name="Somerville C.R."/>
            <person name="Copenhaver G.P."/>
            <person name="Preuss D."/>
            <person name="Nierman W.C."/>
            <person name="White O."/>
            <person name="Eisen J.A."/>
            <person name="Salzberg S.L."/>
            <person name="Fraser C.M."/>
            <person name="Venter J.C."/>
        </authorList>
    </citation>
    <scope>NUCLEOTIDE SEQUENCE [LARGE SCALE GENOMIC DNA]</scope>
    <source>
        <strain>cv. Columbia</strain>
    </source>
</reference>
<reference key="3">
    <citation type="journal article" date="2017" name="Plant J.">
        <title>Araport11: a complete reannotation of the Arabidopsis thaliana reference genome.</title>
        <authorList>
            <person name="Cheng C.Y."/>
            <person name="Krishnakumar V."/>
            <person name="Chan A.P."/>
            <person name="Thibaud-Nissen F."/>
            <person name="Schobel S."/>
            <person name="Town C.D."/>
        </authorList>
    </citation>
    <scope>GENOME REANNOTATION</scope>
    <source>
        <strain>cv. Columbia</strain>
    </source>
</reference>
<reference key="4">
    <citation type="journal article" date="2003" name="Science">
        <title>Empirical analysis of transcriptional activity in the Arabidopsis genome.</title>
        <authorList>
            <person name="Yamada K."/>
            <person name="Lim J."/>
            <person name="Dale J.M."/>
            <person name="Chen H."/>
            <person name="Shinn P."/>
            <person name="Palm C.J."/>
            <person name="Southwick A.M."/>
            <person name="Wu H.C."/>
            <person name="Kim C.J."/>
            <person name="Nguyen M."/>
            <person name="Pham P.K."/>
            <person name="Cheuk R.F."/>
            <person name="Karlin-Newmann G."/>
            <person name="Liu S.X."/>
            <person name="Lam B."/>
            <person name="Sakano H."/>
            <person name="Wu T."/>
            <person name="Yu G."/>
            <person name="Miranda M."/>
            <person name="Quach H.L."/>
            <person name="Tripp M."/>
            <person name="Chang C.H."/>
            <person name="Lee J.M."/>
            <person name="Toriumi M.J."/>
            <person name="Chan M.M."/>
            <person name="Tang C.C."/>
            <person name="Onodera C.S."/>
            <person name="Deng J.M."/>
            <person name="Akiyama K."/>
            <person name="Ansari Y."/>
            <person name="Arakawa T."/>
            <person name="Banh J."/>
            <person name="Banno F."/>
            <person name="Bowser L."/>
            <person name="Brooks S.Y."/>
            <person name="Carninci P."/>
            <person name="Chao Q."/>
            <person name="Choy N."/>
            <person name="Enju A."/>
            <person name="Goldsmith A.D."/>
            <person name="Gurjal M."/>
            <person name="Hansen N.F."/>
            <person name="Hayashizaki Y."/>
            <person name="Johnson-Hopson C."/>
            <person name="Hsuan V.W."/>
            <person name="Iida K."/>
            <person name="Karnes M."/>
            <person name="Khan S."/>
            <person name="Koesema E."/>
            <person name="Ishida J."/>
            <person name="Jiang P.X."/>
            <person name="Jones T."/>
            <person name="Kawai J."/>
            <person name="Kamiya A."/>
            <person name="Meyers C."/>
            <person name="Nakajima M."/>
            <person name="Narusaka M."/>
            <person name="Seki M."/>
            <person name="Sakurai T."/>
            <person name="Satou M."/>
            <person name="Tamse R."/>
            <person name="Vaysberg M."/>
            <person name="Wallender E.K."/>
            <person name="Wong C."/>
            <person name="Yamamura Y."/>
            <person name="Yuan S."/>
            <person name="Shinozaki K."/>
            <person name="Davis R.W."/>
            <person name="Theologis A."/>
            <person name="Ecker J.R."/>
        </authorList>
    </citation>
    <scope>NUCLEOTIDE SEQUENCE [LARGE SCALE MRNA]</scope>
    <source>
        <strain>cv. Columbia</strain>
    </source>
</reference>
<reference key="5">
    <citation type="submission" date="2002-03" db="EMBL/GenBank/DDBJ databases">
        <title>Full-length cDNA from Arabidopsis thaliana.</title>
        <authorList>
            <person name="Brover V.V."/>
            <person name="Troukhan M.E."/>
            <person name="Alexandrov N.A."/>
            <person name="Lu Y.-P."/>
            <person name="Flavell R.B."/>
            <person name="Feldmann K.A."/>
        </authorList>
    </citation>
    <scope>NUCLEOTIDE SEQUENCE [LARGE SCALE MRNA]</scope>
</reference>
<name>UBC29_ARATH</name>
<gene>
    <name type="primary">UBC29</name>
    <name type="ordered locus">At2g16740</name>
    <name type="ORF">T24I21.15</name>
</gene>
<feature type="chain" id="PRO_0000345194" description="Ubiquitin-conjugating enzyme E2 29">
    <location>
        <begin position="1"/>
        <end position="148"/>
    </location>
</feature>
<feature type="domain" description="UBC core" evidence="1">
    <location>
        <begin position="1"/>
        <end position="147"/>
    </location>
</feature>
<feature type="active site" description="Glycyl thioester intermediate" evidence="1 2">
    <location>
        <position position="85"/>
    </location>
</feature>